<organism>
    <name type="scientific">Shewanella oneidensis (strain ATCC 700550 / JCM 31522 / CIP 106686 / LMG 19005 / NCIMB 14063 / MR-1)</name>
    <dbReference type="NCBI Taxonomy" id="211586"/>
    <lineage>
        <taxon>Bacteria</taxon>
        <taxon>Pseudomonadati</taxon>
        <taxon>Pseudomonadota</taxon>
        <taxon>Gammaproteobacteria</taxon>
        <taxon>Alteromonadales</taxon>
        <taxon>Shewanellaceae</taxon>
        <taxon>Shewanella</taxon>
    </lineage>
</organism>
<proteinExistence type="inferred from homology"/>
<sequence length="174" mass="18918">MTTIVSVRRNNQVVIAGDGQVSLGNTVMKGNAKKVRRLYHNKVLAGFAGGTADAFTLFERFESKLEMHQGHLLRSAVELAKDWRTDRMLRKLEAMLVVADAEASLIITGNGDVVQPEHDLVAIGSGGNYAQAAALALLQNTELSALEIAEKSLTIAGDICVFTNQFKTIEELNY</sequence>
<name>HSLV_SHEON</name>
<feature type="initiator methionine" description="Removed" evidence="1">
    <location>
        <position position="1"/>
    </location>
</feature>
<feature type="chain" id="PRO_0000148144" description="ATP-dependent protease subunit HslV">
    <location>
        <begin position="2"/>
        <end position="174"/>
    </location>
</feature>
<feature type="active site" evidence="2">
    <location>
        <position position="2"/>
    </location>
</feature>
<feature type="binding site" evidence="2">
    <location>
        <position position="157"/>
    </location>
    <ligand>
        <name>Na(+)</name>
        <dbReference type="ChEBI" id="CHEBI:29101"/>
    </ligand>
</feature>
<feature type="binding site" evidence="2">
    <location>
        <position position="160"/>
    </location>
    <ligand>
        <name>Na(+)</name>
        <dbReference type="ChEBI" id="CHEBI:29101"/>
    </ligand>
</feature>
<feature type="binding site" evidence="2">
    <location>
        <position position="163"/>
    </location>
    <ligand>
        <name>Na(+)</name>
        <dbReference type="ChEBI" id="CHEBI:29101"/>
    </ligand>
</feature>
<gene>
    <name evidence="2" type="primary">hslV</name>
    <name type="ordered locus">SO_4162</name>
</gene>
<protein>
    <recommendedName>
        <fullName evidence="2">ATP-dependent protease subunit HslV</fullName>
        <ecNumber evidence="2">3.4.25.2</ecNumber>
    </recommendedName>
</protein>
<comment type="function">
    <text evidence="2">Protease subunit of a proteasome-like degradation complex believed to be a general protein degrading machinery.</text>
</comment>
<comment type="catalytic activity">
    <reaction evidence="2">
        <text>ATP-dependent cleavage of peptide bonds with broad specificity.</text>
        <dbReference type="EC" id="3.4.25.2"/>
    </reaction>
</comment>
<comment type="activity regulation">
    <text evidence="2">Allosterically activated by HslU binding.</text>
</comment>
<comment type="subunit">
    <text evidence="2">A double ring-shaped homohexamer of HslV is capped on each side by a ring-shaped HslU homohexamer. The assembly of the HslU/HslV complex is dependent on binding of ATP.</text>
</comment>
<comment type="subcellular location">
    <subcellularLocation>
        <location evidence="2">Cytoplasm</location>
    </subcellularLocation>
</comment>
<comment type="similarity">
    <text evidence="2">Belongs to the peptidase T1B family. HslV subfamily.</text>
</comment>
<reference key="1">
    <citation type="journal article" date="2002" name="Nat. Biotechnol.">
        <title>Genome sequence of the dissimilatory metal ion-reducing bacterium Shewanella oneidensis.</title>
        <authorList>
            <person name="Heidelberg J.F."/>
            <person name="Paulsen I.T."/>
            <person name="Nelson K.E."/>
            <person name="Gaidos E.J."/>
            <person name="Nelson W.C."/>
            <person name="Read T.D."/>
            <person name="Eisen J.A."/>
            <person name="Seshadri R."/>
            <person name="Ward N.L."/>
            <person name="Methe B.A."/>
            <person name="Clayton R.A."/>
            <person name="Meyer T."/>
            <person name="Tsapin A."/>
            <person name="Scott J."/>
            <person name="Beanan M.J."/>
            <person name="Brinkac L.M."/>
            <person name="Daugherty S.C."/>
            <person name="DeBoy R.T."/>
            <person name="Dodson R.J."/>
            <person name="Durkin A.S."/>
            <person name="Haft D.H."/>
            <person name="Kolonay J.F."/>
            <person name="Madupu R."/>
            <person name="Peterson J.D."/>
            <person name="Umayam L.A."/>
            <person name="White O."/>
            <person name="Wolf A.M."/>
            <person name="Vamathevan J.J."/>
            <person name="Weidman J.F."/>
            <person name="Impraim M."/>
            <person name="Lee K."/>
            <person name="Berry K.J."/>
            <person name="Lee C."/>
            <person name="Mueller J."/>
            <person name="Khouri H.M."/>
            <person name="Gill J."/>
            <person name="Utterback T.R."/>
            <person name="McDonald L.A."/>
            <person name="Feldblyum T.V."/>
            <person name="Smith H.O."/>
            <person name="Venter J.C."/>
            <person name="Nealson K.H."/>
            <person name="Fraser C.M."/>
        </authorList>
    </citation>
    <scope>NUCLEOTIDE SEQUENCE [LARGE SCALE GENOMIC DNA]</scope>
    <source>
        <strain>ATCC 700550 / JCM 31522 / CIP 106686 / LMG 19005 / NCIMB 14063 / MR-1</strain>
    </source>
</reference>
<dbReference type="EC" id="3.4.25.2" evidence="2"/>
<dbReference type="EMBL" id="AE014299">
    <property type="protein sequence ID" value="AAN57135.1"/>
    <property type="molecule type" value="Genomic_DNA"/>
</dbReference>
<dbReference type="RefSeq" id="NP_719691.1">
    <property type="nucleotide sequence ID" value="NC_004347.2"/>
</dbReference>
<dbReference type="RefSeq" id="WP_011073856.1">
    <property type="nucleotide sequence ID" value="NZ_CP053946.1"/>
</dbReference>
<dbReference type="SMR" id="Q8E9V0"/>
<dbReference type="STRING" id="211586.SO_4162"/>
<dbReference type="MEROPS" id="T01.006"/>
<dbReference type="PaxDb" id="211586-SO_4162"/>
<dbReference type="GeneID" id="94729619"/>
<dbReference type="KEGG" id="son:SO_4162"/>
<dbReference type="PATRIC" id="fig|211586.12.peg.4021"/>
<dbReference type="eggNOG" id="COG5405">
    <property type="taxonomic scope" value="Bacteria"/>
</dbReference>
<dbReference type="HOGENOM" id="CLU_093872_1_0_6"/>
<dbReference type="OrthoDB" id="9804884at2"/>
<dbReference type="PhylomeDB" id="Q8E9V0"/>
<dbReference type="BioCyc" id="SONE211586:G1GMP-3841-MONOMER"/>
<dbReference type="Proteomes" id="UP000008186">
    <property type="component" value="Chromosome"/>
</dbReference>
<dbReference type="GO" id="GO:0005737">
    <property type="term" value="C:cytoplasm"/>
    <property type="evidence" value="ECO:0000318"/>
    <property type="project" value="GO_Central"/>
</dbReference>
<dbReference type="GO" id="GO:0009376">
    <property type="term" value="C:HslUV protease complex"/>
    <property type="evidence" value="ECO:0007669"/>
    <property type="project" value="UniProtKB-UniRule"/>
</dbReference>
<dbReference type="GO" id="GO:0005839">
    <property type="term" value="C:proteasome core complex"/>
    <property type="evidence" value="ECO:0007669"/>
    <property type="project" value="InterPro"/>
</dbReference>
<dbReference type="GO" id="GO:0046872">
    <property type="term" value="F:metal ion binding"/>
    <property type="evidence" value="ECO:0007669"/>
    <property type="project" value="UniProtKB-KW"/>
</dbReference>
<dbReference type="GO" id="GO:0004298">
    <property type="term" value="F:threonine-type endopeptidase activity"/>
    <property type="evidence" value="ECO:0007669"/>
    <property type="project" value="UniProtKB-KW"/>
</dbReference>
<dbReference type="GO" id="GO:0051603">
    <property type="term" value="P:proteolysis involved in protein catabolic process"/>
    <property type="evidence" value="ECO:0000318"/>
    <property type="project" value="GO_Central"/>
</dbReference>
<dbReference type="CDD" id="cd01913">
    <property type="entry name" value="protease_HslV"/>
    <property type="match status" value="1"/>
</dbReference>
<dbReference type="FunFam" id="3.60.20.10:FF:000002">
    <property type="entry name" value="ATP-dependent protease subunit HslV"/>
    <property type="match status" value="1"/>
</dbReference>
<dbReference type="Gene3D" id="3.60.20.10">
    <property type="entry name" value="Glutamine Phosphoribosylpyrophosphate, subunit 1, domain 1"/>
    <property type="match status" value="1"/>
</dbReference>
<dbReference type="HAMAP" id="MF_00248">
    <property type="entry name" value="HslV"/>
    <property type="match status" value="1"/>
</dbReference>
<dbReference type="InterPro" id="IPR022281">
    <property type="entry name" value="ATP-dep_Prtase_HsIV_su"/>
</dbReference>
<dbReference type="InterPro" id="IPR029055">
    <property type="entry name" value="Ntn_hydrolases_N"/>
</dbReference>
<dbReference type="InterPro" id="IPR001353">
    <property type="entry name" value="Proteasome_sua/b"/>
</dbReference>
<dbReference type="InterPro" id="IPR023333">
    <property type="entry name" value="Proteasome_suB-type"/>
</dbReference>
<dbReference type="NCBIfam" id="TIGR03692">
    <property type="entry name" value="ATP_dep_HslV"/>
    <property type="match status" value="1"/>
</dbReference>
<dbReference type="NCBIfam" id="NF003964">
    <property type="entry name" value="PRK05456.1"/>
    <property type="match status" value="1"/>
</dbReference>
<dbReference type="PANTHER" id="PTHR32194:SF0">
    <property type="entry name" value="ATP-DEPENDENT PROTEASE SUBUNIT HSLV"/>
    <property type="match status" value="1"/>
</dbReference>
<dbReference type="PANTHER" id="PTHR32194">
    <property type="entry name" value="METALLOPROTEASE TLDD"/>
    <property type="match status" value="1"/>
</dbReference>
<dbReference type="Pfam" id="PF00227">
    <property type="entry name" value="Proteasome"/>
    <property type="match status" value="1"/>
</dbReference>
<dbReference type="PIRSF" id="PIRSF039093">
    <property type="entry name" value="HslV"/>
    <property type="match status" value="1"/>
</dbReference>
<dbReference type="SUPFAM" id="SSF56235">
    <property type="entry name" value="N-terminal nucleophile aminohydrolases (Ntn hydrolases)"/>
    <property type="match status" value="1"/>
</dbReference>
<dbReference type="PROSITE" id="PS51476">
    <property type="entry name" value="PROTEASOME_BETA_2"/>
    <property type="match status" value="1"/>
</dbReference>
<accession>Q8E9V0</accession>
<keyword id="KW-0021">Allosteric enzyme</keyword>
<keyword id="KW-0963">Cytoplasm</keyword>
<keyword id="KW-0378">Hydrolase</keyword>
<keyword id="KW-0479">Metal-binding</keyword>
<keyword id="KW-0645">Protease</keyword>
<keyword id="KW-1185">Reference proteome</keyword>
<keyword id="KW-0915">Sodium</keyword>
<keyword id="KW-0888">Threonine protease</keyword>
<evidence type="ECO:0000250" key="1"/>
<evidence type="ECO:0000255" key="2">
    <source>
        <dbReference type="HAMAP-Rule" id="MF_00248"/>
    </source>
</evidence>